<protein>
    <recommendedName>
        <fullName evidence="1">S-adenosylmethionine synthase</fullName>
        <shortName evidence="1">AdoMet synthase</shortName>
        <ecNumber evidence="1">2.5.1.6</ecNumber>
    </recommendedName>
    <alternativeName>
        <fullName evidence="1">MAT</fullName>
    </alternativeName>
    <alternativeName>
        <fullName evidence="1">Methionine adenosyltransferase</fullName>
    </alternativeName>
</protein>
<dbReference type="EC" id="2.5.1.6" evidence="1"/>
<dbReference type="EMBL" id="AP008232">
    <property type="protein sequence ID" value="BAE75294.1"/>
    <property type="molecule type" value="Genomic_DNA"/>
</dbReference>
<dbReference type="RefSeq" id="WP_011411749.1">
    <property type="nucleotide sequence ID" value="NC_007712.1"/>
</dbReference>
<dbReference type="SMR" id="Q2NRD1"/>
<dbReference type="STRING" id="343509.SG2019"/>
<dbReference type="KEGG" id="sgl:SG2019"/>
<dbReference type="eggNOG" id="COG0192">
    <property type="taxonomic scope" value="Bacteria"/>
</dbReference>
<dbReference type="HOGENOM" id="CLU_041802_1_1_6"/>
<dbReference type="OrthoDB" id="9801686at2"/>
<dbReference type="BioCyc" id="SGLO343509:SGP1_RS18460-MONOMER"/>
<dbReference type="UniPathway" id="UPA00315">
    <property type="reaction ID" value="UER00080"/>
</dbReference>
<dbReference type="Proteomes" id="UP000001932">
    <property type="component" value="Chromosome"/>
</dbReference>
<dbReference type="GO" id="GO:0005737">
    <property type="term" value="C:cytoplasm"/>
    <property type="evidence" value="ECO:0007669"/>
    <property type="project" value="UniProtKB-SubCell"/>
</dbReference>
<dbReference type="GO" id="GO:0005524">
    <property type="term" value="F:ATP binding"/>
    <property type="evidence" value="ECO:0007669"/>
    <property type="project" value="UniProtKB-UniRule"/>
</dbReference>
<dbReference type="GO" id="GO:0000287">
    <property type="term" value="F:magnesium ion binding"/>
    <property type="evidence" value="ECO:0007669"/>
    <property type="project" value="UniProtKB-UniRule"/>
</dbReference>
<dbReference type="GO" id="GO:0004478">
    <property type="term" value="F:methionine adenosyltransferase activity"/>
    <property type="evidence" value="ECO:0007669"/>
    <property type="project" value="UniProtKB-UniRule"/>
</dbReference>
<dbReference type="GO" id="GO:0006730">
    <property type="term" value="P:one-carbon metabolic process"/>
    <property type="evidence" value="ECO:0007669"/>
    <property type="project" value="UniProtKB-KW"/>
</dbReference>
<dbReference type="GO" id="GO:0006556">
    <property type="term" value="P:S-adenosylmethionine biosynthetic process"/>
    <property type="evidence" value="ECO:0007669"/>
    <property type="project" value="UniProtKB-UniRule"/>
</dbReference>
<dbReference type="CDD" id="cd18079">
    <property type="entry name" value="S-AdoMet_synt"/>
    <property type="match status" value="1"/>
</dbReference>
<dbReference type="FunFam" id="3.30.300.10:FF:000003">
    <property type="entry name" value="S-adenosylmethionine synthase"/>
    <property type="match status" value="1"/>
</dbReference>
<dbReference type="Gene3D" id="3.30.300.10">
    <property type="match status" value="3"/>
</dbReference>
<dbReference type="HAMAP" id="MF_00086">
    <property type="entry name" value="S_AdoMet_synth1"/>
    <property type="match status" value="1"/>
</dbReference>
<dbReference type="InterPro" id="IPR022631">
    <property type="entry name" value="ADOMET_SYNTHASE_CS"/>
</dbReference>
<dbReference type="InterPro" id="IPR022630">
    <property type="entry name" value="S-AdoMet_synt_C"/>
</dbReference>
<dbReference type="InterPro" id="IPR022629">
    <property type="entry name" value="S-AdoMet_synt_central"/>
</dbReference>
<dbReference type="InterPro" id="IPR022628">
    <property type="entry name" value="S-AdoMet_synt_N"/>
</dbReference>
<dbReference type="InterPro" id="IPR002133">
    <property type="entry name" value="S-AdoMet_synthetase"/>
</dbReference>
<dbReference type="InterPro" id="IPR022636">
    <property type="entry name" value="S-AdoMet_synthetase_sfam"/>
</dbReference>
<dbReference type="NCBIfam" id="TIGR01034">
    <property type="entry name" value="metK"/>
    <property type="match status" value="1"/>
</dbReference>
<dbReference type="PANTHER" id="PTHR11964">
    <property type="entry name" value="S-ADENOSYLMETHIONINE SYNTHETASE"/>
    <property type="match status" value="1"/>
</dbReference>
<dbReference type="Pfam" id="PF02773">
    <property type="entry name" value="S-AdoMet_synt_C"/>
    <property type="match status" value="1"/>
</dbReference>
<dbReference type="Pfam" id="PF02772">
    <property type="entry name" value="S-AdoMet_synt_M"/>
    <property type="match status" value="1"/>
</dbReference>
<dbReference type="Pfam" id="PF00438">
    <property type="entry name" value="S-AdoMet_synt_N"/>
    <property type="match status" value="1"/>
</dbReference>
<dbReference type="PIRSF" id="PIRSF000497">
    <property type="entry name" value="MAT"/>
    <property type="match status" value="1"/>
</dbReference>
<dbReference type="SUPFAM" id="SSF55973">
    <property type="entry name" value="S-adenosylmethionine synthetase"/>
    <property type="match status" value="3"/>
</dbReference>
<dbReference type="PROSITE" id="PS00376">
    <property type="entry name" value="ADOMET_SYNTHASE_1"/>
    <property type="match status" value="1"/>
</dbReference>
<dbReference type="PROSITE" id="PS00377">
    <property type="entry name" value="ADOMET_SYNTHASE_2"/>
    <property type="match status" value="1"/>
</dbReference>
<comment type="function">
    <text evidence="1">Catalyzes the formation of S-adenosylmethionine (AdoMet) from methionine and ATP. The overall synthetic reaction is composed of two sequential steps, AdoMet formation and the subsequent tripolyphosphate hydrolysis which occurs prior to release of AdoMet from the enzyme.</text>
</comment>
<comment type="catalytic activity">
    <reaction evidence="1">
        <text>L-methionine + ATP + H2O = S-adenosyl-L-methionine + phosphate + diphosphate</text>
        <dbReference type="Rhea" id="RHEA:21080"/>
        <dbReference type="ChEBI" id="CHEBI:15377"/>
        <dbReference type="ChEBI" id="CHEBI:30616"/>
        <dbReference type="ChEBI" id="CHEBI:33019"/>
        <dbReference type="ChEBI" id="CHEBI:43474"/>
        <dbReference type="ChEBI" id="CHEBI:57844"/>
        <dbReference type="ChEBI" id="CHEBI:59789"/>
        <dbReference type="EC" id="2.5.1.6"/>
    </reaction>
</comment>
<comment type="cofactor">
    <cofactor evidence="1">
        <name>Mg(2+)</name>
        <dbReference type="ChEBI" id="CHEBI:18420"/>
    </cofactor>
    <text evidence="1">Binds 2 divalent ions per subunit.</text>
</comment>
<comment type="cofactor">
    <cofactor evidence="1">
        <name>K(+)</name>
        <dbReference type="ChEBI" id="CHEBI:29103"/>
    </cofactor>
    <text evidence="1">Binds 1 potassium ion per subunit.</text>
</comment>
<comment type="pathway">
    <text evidence="1">Amino-acid biosynthesis; S-adenosyl-L-methionine biosynthesis; S-adenosyl-L-methionine from L-methionine: step 1/1.</text>
</comment>
<comment type="subunit">
    <text evidence="1">Homotetramer; dimer of dimers.</text>
</comment>
<comment type="subcellular location">
    <subcellularLocation>
        <location evidence="1">Cytoplasm</location>
    </subcellularLocation>
</comment>
<comment type="similarity">
    <text evidence="1">Belongs to the AdoMet synthase family.</text>
</comment>
<proteinExistence type="inferred from homology"/>
<evidence type="ECO:0000255" key="1">
    <source>
        <dbReference type="HAMAP-Rule" id="MF_00086"/>
    </source>
</evidence>
<reference key="1">
    <citation type="journal article" date="2006" name="Genome Res.">
        <title>Massive genome erosion and functional adaptations provide insights into the symbiotic lifestyle of Sodalis glossinidius in the tsetse host.</title>
        <authorList>
            <person name="Toh H."/>
            <person name="Weiss B.L."/>
            <person name="Perkin S.A.H."/>
            <person name="Yamashita A."/>
            <person name="Oshima K."/>
            <person name="Hattori M."/>
            <person name="Aksoy S."/>
        </authorList>
    </citation>
    <scope>NUCLEOTIDE SEQUENCE [LARGE SCALE GENOMIC DNA]</scope>
    <source>
        <strain>morsitans</strain>
    </source>
</reference>
<feature type="chain" id="PRO_0000241038" description="S-adenosylmethionine synthase">
    <location>
        <begin position="1"/>
        <end position="385"/>
    </location>
</feature>
<feature type="region of interest" description="Flexible loop" evidence="1">
    <location>
        <begin position="99"/>
        <end position="109"/>
    </location>
</feature>
<feature type="binding site" description="in other chain" evidence="1">
    <location>
        <position position="15"/>
    </location>
    <ligand>
        <name>ATP</name>
        <dbReference type="ChEBI" id="CHEBI:30616"/>
        <note>ligand shared between two neighboring subunits</note>
    </ligand>
</feature>
<feature type="binding site" evidence="1">
    <location>
        <position position="17"/>
    </location>
    <ligand>
        <name>Mg(2+)</name>
        <dbReference type="ChEBI" id="CHEBI:18420"/>
    </ligand>
</feature>
<feature type="binding site" evidence="1">
    <location>
        <position position="43"/>
    </location>
    <ligand>
        <name>K(+)</name>
        <dbReference type="ChEBI" id="CHEBI:29103"/>
    </ligand>
</feature>
<feature type="binding site" description="in other chain" evidence="1">
    <location>
        <position position="56"/>
    </location>
    <ligand>
        <name>L-methionine</name>
        <dbReference type="ChEBI" id="CHEBI:57844"/>
        <note>ligand shared between two neighboring subunits</note>
    </ligand>
</feature>
<feature type="binding site" description="in other chain" evidence="1">
    <location>
        <position position="99"/>
    </location>
    <ligand>
        <name>L-methionine</name>
        <dbReference type="ChEBI" id="CHEBI:57844"/>
        <note>ligand shared between two neighboring subunits</note>
    </ligand>
</feature>
<feature type="binding site" description="in other chain" evidence="1">
    <location>
        <begin position="164"/>
        <end position="166"/>
    </location>
    <ligand>
        <name>ATP</name>
        <dbReference type="ChEBI" id="CHEBI:30616"/>
        <note>ligand shared between two neighboring subunits</note>
    </ligand>
</feature>
<feature type="binding site" description="in other chain" evidence="1">
    <location>
        <begin position="230"/>
        <end position="231"/>
    </location>
    <ligand>
        <name>ATP</name>
        <dbReference type="ChEBI" id="CHEBI:30616"/>
        <note>ligand shared between two neighboring subunits</note>
    </ligand>
</feature>
<feature type="binding site" evidence="1">
    <location>
        <position position="239"/>
    </location>
    <ligand>
        <name>ATP</name>
        <dbReference type="ChEBI" id="CHEBI:30616"/>
        <note>ligand shared between two neighboring subunits</note>
    </ligand>
</feature>
<feature type="binding site" evidence="1">
    <location>
        <position position="239"/>
    </location>
    <ligand>
        <name>L-methionine</name>
        <dbReference type="ChEBI" id="CHEBI:57844"/>
        <note>ligand shared between two neighboring subunits</note>
    </ligand>
</feature>
<feature type="binding site" description="in other chain" evidence="1">
    <location>
        <begin position="245"/>
        <end position="246"/>
    </location>
    <ligand>
        <name>ATP</name>
        <dbReference type="ChEBI" id="CHEBI:30616"/>
        <note>ligand shared between two neighboring subunits</note>
    </ligand>
</feature>
<feature type="binding site" evidence="1">
    <location>
        <position position="262"/>
    </location>
    <ligand>
        <name>ATP</name>
        <dbReference type="ChEBI" id="CHEBI:30616"/>
        <note>ligand shared between two neighboring subunits</note>
    </ligand>
</feature>
<feature type="binding site" evidence="1">
    <location>
        <position position="266"/>
    </location>
    <ligand>
        <name>ATP</name>
        <dbReference type="ChEBI" id="CHEBI:30616"/>
        <note>ligand shared between two neighboring subunits</note>
    </ligand>
</feature>
<feature type="binding site" description="in other chain" evidence="1">
    <location>
        <position position="270"/>
    </location>
    <ligand>
        <name>L-methionine</name>
        <dbReference type="ChEBI" id="CHEBI:57844"/>
        <note>ligand shared between two neighboring subunits</note>
    </ligand>
</feature>
<gene>
    <name evidence="1" type="primary">metK</name>
    <name type="ordered locus">SG2019</name>
</gene>
<sequence>MAKHLFTSESVSEGHPDKIADQISDAVLDAILAQDPKARVACETYVKTGMVLVGGEITTSAWVDIEELTRSTIREIGYIHSDMGFDANSCAVLSAIGKQSPDINQGVDRTDPLEQGAGDQGMMFGYATNETDVLMPAPITYAHRLVARQSQVRKNGTLPWLRPDAKSQVTFAYDNGKVVGIDAVVLSTQHAEDIALPQLKEAVMEEIIKPVLPAEWLSAQTKYFINPTGRFVIGGPMGDCGLTGRKIIVDTYGGMARHGGGAFSGKDPSKVDRSAAYAARYVAKNIVAAGLAERCEIQVSYAIGVAEPTSITIETFGTEKIPADNLTALVREFFDLRPHGLITMLDLLQPIYRETAAYGHFGREHFPWEKTDKAELLLRDAAGLK</sequence>
<name>METK_SODGM</name>
<organism>
    <name type="scientific">Sodalis glossinidius (strain morsitans)</name>
    <dbReference type="NCBI Taxonomy" id="343509"/>
    <lineage>
        <taxon>Bacteria</taxon>
        <taxon>Pseudomonadati</taxon>
        <taxon>Pseudomonadota</taxon>
        <taxon>Gammaproteobacteria</taxon>
        <taxon>Enterobacterales</taxon>
        <taxon>Bruguierivoracaceae</taxon>
        <taxon>Sodalis</taxon>
    </lineage>
</organism>
<accession>Q2NRD1</accession>
<keyword id="KW-0067">ATP-binding</keyword>
<keyword id="KW-0963">Cytoplasm</keyword>
<keyword id="KW-0460">Magnesium</keyword>
<keyword id="KW-0479">Metal-binding</keyword>
<keyword id="KW-0547">Nucleotide-binding</keyword>
<keyword id="KW-0554">One-carbon metabolism</keyword>
<keyword id="KW-0630">Potassium</keyword>
<keyword id="KW-0808">Transferase</keyword>